<feature type="chain" id="PRO_0000153935" description="Beta-amylase">
    <location>
        <begin position="1"/>
        <end position="488"/>
    </location>
</feature>
<feature type="active site" description="Proton donor" evidence="2">
    <location>
        <position position="184"/>
    </location>
</feature>
<feature type="active site" description="Proton acceptor" evidence="1">
    <location>
        <position position="378"/>
    </location>
</feature>
<feature type="binding site" evidence="1">
    <location>
        <position position="51"/>
    </location>
    <ligand>
        <name>substrate</name>
    </ligand>
</feature>
<feature type="binding site" evidence="1">
    <location>
        <position position="91"/>
    </location>
    <ligand>
        <name>substrate</name>
    </ligand>
</feature>
<feature type="binding site" evidence="1">
    <location>
        <position position="99"/>
    </location>
    <ligand>
        <name>substrate</name>
    </ligand>
</feature>
<feature type="binding site" evidence="1">
    <location>
        <position position="293"/>
    </location>
    <ligand>
        <name>substrate</name>
    </ligand>
</feature>
<feature type="binding site" evidence="1">
    <location>
        <position position="298"/>
    </location>
    <ligand>
        <name>substrate</name>
    </ligand>
</feature>
<feature type="binding site" evidence="1">
    <location>
        <position position="340"/>
    </location>
    <ligand>
        <name>substrate</name>
    </ligand>
</feature>
<feature type="binding site" evidence="1">
    <location>
        <begin position="379"/>
        <end position="380"/>
    </location>
    <ligand>
        <name>substrate</name>
    </ligand>
</feature>
<feature type="binding site" evidence="1">
    <location>
        <position position="418"/>
    </location>
    <ligand>
        <name>substrate</name>
    </ligand>
</feature>
<keyword id="KW-0119">Carbohydrate metabolism</keyword>
<keyword id="KW-0326">Glycosidase</keyword>
<keyword id="KW-0378">Hydrolase</keyword>
<keyword id="KW-0624">Polysaccharide degradation</keyword>
<keyword id="KW-1185">Reference proteome</keyword>
<reference key="1">
    <citation type="journal article" date="1997" name="Plant Physiol.">
        <title>Characterization of a maize beta-amylase cDNA clone and its expression during seed germination.</title>
        <authorList>
            <person name="Wang S.M."/>
            <person name="Lue W.L."/>
            <person name="Wu S.Y."/>
            <person name="Huang H.W."/>
            <person name="Chen J."/>
        </authorList>
    </citation>
    <scope>NUCLEOTIDE SEQUENCE [MRNA]</scope>
    <source>
        <strain>cv. TN351</strain>
        <tissue>Aleurone</tissue>
    </source>
</reference>
<proteinExistence type="evidence at transcript level"/>
<protein>
    <recommendedName>
        <fullName>Beta-amylase</fullName>
        <ecNumber>3.2.1.2</ecNumber>
    </recommendedName>
    <alternativeName>
        <fullName>1,4-alpha-D-glucan maltohydrolase</fullName>
    </alternativeName>
</protein>
<comment type="catalytic activity">
    <reaction>
        <text>Hydrolysis of (1-&gt;4)-alpha-D-glucosidic linkages in polysaccharides so as to remove successive maltose units from the non-reducing ends of the chains.</text>
        <dbReference type="EC" id="3.2.1.2"/>
    </reaction>
</comment>
<comment type="similarity">
    <text evidence="3">Belongs to the glycosyl hydrolase 14 family.</text>
</comment>
<dbReference type="EC" id="3.2.1.2"/>
<dbReference type="EMBL" id="Z25871">
    <property type="protein sequence ID" value="CAA81091.1"/>
    <property type="molecule type" value="mRNA"/>
</dbReference>
<dbReference type="PIR" id="S37075">
    <property type="entry name" value="S37075"/>
</dbReference>
<dbReference type="RefSeq" id="NP_001105496.1">
    <property type="nucleotide sequence ID" value="NM_001112026.1"/>
</dbReference>
<dbReference type="SMR" id="P55005"/>
<dbReference type="STRING" id="4577.P55005"/>
<dbReference type="CAZy" id="GH14">
    <property type="family name" value="Glycoside Hydrolase Family 14"/>
</dbReference>
<dbReference type="PaxDb" id="4577-GRMZM2G058310_P01"/>
<dbReference type="GeneID" id="542472"/>
<dbReference type="KEGG" id="zma:542472"/>
<dbReference type="MaizeGDB" id="30053"/>
<dbReference type="eggNOG" id="ENOG502QUU5">
    <property type="taxonomic scope" value="Eukaryota"/>
</dbReference>
<dbReference type="InParanoid" id="P55005"/>
<dbReference type="OrthoDB" id="1660156at2759"/>
<dbReference type="Proteomes" id="UP000007305">
    <property type="component" value="Unplaced"/>
</dbReference>
<dbReference type="ExpressionAtlas" id="P55005">
    <property type="expression patterns" value="baseline and differential"/>
</dbReference>
<dbReference type="GO" id="GO:0016161">
    <property type="term" value="F:beta-amylase activity"/>
    <property type="evidence" value="ECO:0007669"/>
    <property type="project" value="UniProtKB-EC"/>
</dbReference>
<dbReference type="GO" id="GO:0000272">
    <property type="term" value="P:polysaccharide catabolic process"/>
    <property type="evidence" value="ECO:0007669"/>
    <property type="project" value="UniProtKB-KW"/>
</dbReference>
<dbReference type="FunFam" id="3.20.20.80:FF:000066">
    <property type="entry name" value="Beta-amylase"/>
    <property type="match status" value="1"/>
</dbReference>
<dbReference type="Gene3D" id="3.20.20.80">
    <property type="entry name" value="Glycosidases"/>
    <property type="match status" value="1"/>
</dbReference>
<dbReference type="InterPro" id="IPR001554">
    <property type="entry name" value="Glyco_hydro_14"/>
</dbReference>
<dbReference type="InterPro" id="IPR018238">
    <property type="entry name" value="Glyco_hydro_14_CS"/>
</dbReference>
<dbReference type="InterPro" id="IPR001371">
    <property type="entry name" value="Glyco_hydro_14B_pln"/>
</dbReference>
<dbReference type="InterPro" id="IPR017853">
    <property type="entry name" value="Glycoside_hydrolase_SF"/>
</dbReference>
<dbReference type="PANTHER" id="PTHR31352:SF60">
    <property type="entry name" value="BETA-AMYLASE"/>
    <property type="match status" value="1"/>
</dbReference>
<dbReference type="PANTHER" id="PTHR31352">
    <property type="entry name" value="BETA-AMYLASE 1, CHLOROPLASTIC"/>
    <property type="match status" value="1"/>
</dbReference>
<dbReference type="Pfam" id="PF01373">
    <property type="entry name" value="Glyco_hydro_14"/>
    <property type="match status" value="1"/>
</dbReference>
<dbReference type="PRINTS" id="PR00750">
    <property type="entry name" value="BETAAMYLASE"/>
</dbReference>
<dbReference type="PRINTS" id="PR00842">
    <property type="entry name" value="GLHYDLASE14B"/>
</dbReference>
<dbReference type="SUPFAM" id="SSF51445">
    <property type="entry name" value="(Trans)glycosidases"/>
    <property type="match status" value="1"/>
</dbReference>
<dbReference type="PROSITE" id="PS00506">
    <property type="entry name" value="BETA_AMYLASE_1"/>
    <property type="match status" value="1"/>
</dbReference>
<dbReference type="PROSITE" id="PS00679">
    <property type="entry name" value="BETA_AMYLASE_2"/>
    <property type="match status" value="1"/>
</dbReference>
<sequence length="488" mass="55180">MAGNALANYVQVYVMLPLDVITVDNTFEKEDETRAQLKKLTEAGADGVMIDVWWGLVEGKEPGVYDWSAYRQVFKLVQEAGLKLQAIMSCHQCGGNVGDVVNIPIPQWVRDVGKSNPDIFYTNRSGLTNIEYLTLGVDDQPLFHGRTAIQLYADYMKSFRENMADFLDAGVVVDIEVGLGPAGEMRYPSYPQSQGWVFPGVGEFICYDKYLQADFKAAAEEAGHPEWDLLDDAGTYNDTPEKTQFFADNGTYQTDKGKFFLTWYSNKLIKHGDKILDEANKVFLGCKVQLAIKVSGIHWWYNVPNHAAELTAGYYNLDDRDGYRTIAHMLTRHRASMNFTCAEMRDSEQSSEAKSAPEELVQQVLSAGWREGLNLACENALNRYDATAYNTILRNARPQGINKNGPPEHKLHGFTYLRVSDELFQEQNYTTFKTFVRRMHANLDYNPNVDPVAPLERSKAEIPIEEILEVAQPKLEPFPFDKDTDLPV</sequence>
<name>AMYB_MAIZE</name>
<gene>
    <name type="primary">BMY1</name>
</gene>
<organism>
    <name type="scientific">Zea mays</name>
    <name type="common">Maize</name>
    <dbReference type="NCBI Taxonomy" id="4577"/>
    <lineage>
        <taxon>Eukaryota</taxon>
        <taxon>Viridiplantae</taxon>
        <taxon>Streptophyta</taxon>
        <taxon>Embryophyta</taxon>
        <taxon>Tracheophyta</taxon>
        <taxon>Spermatophyta</taxon>
        <taxon>Magnoliopsida</taxon>
        <taxon>Liliopsida</taxon>
        <taxon>Poales</taxon>
        <taxon>Poaceae</taxon>
        <taxon>PACMAD clade</taxon>
        <taxon>Panicoideae</taxon>
        <taxon>Andropogonodae</taxon>
        <taxon>Andropogoneae</taxon>
        <taxon>Tripsacinae</taxon>
        <taxon>Zea</taxon>
    </lineage>
</organism>
<evidence type="ECO:0000250" key="1">
    <source>
        <dbReference type="UniProtKB" id="P10538"/>
    </source>
</evidence>
<evidence type="ECO:0000255" key="2">
    <source>
        <dbReference type="PROSITE-ProRule" id="PRU10050"/>
    </source>
</evidence>
<evidence type="ECO:0000305" key="3"/>
<accession>P55005</accession>